<sequence length="388" mass="41993">MKWLLLLGLVALSECIMYKVPLIRKKSLRRTLSERGLLKDFLKKHNLNPARKYFPQWEAPTLVDEQPLENYLDMEYFGTIGIGTPAQDFTVVFDTGSSNLWVPSVYCSSLACTNHNRFNPEDSSTYQSTSETVSITYGTGSMTGILGYDTVQVGGISDTNQIFGLSETEPGSFLYYAPFDGILGLAYPSISSSGATPVFDNIWNQGLVSQDLFSVYLSADDKSGSVVIFGGIDSSYYTGSLNWVPVTVEGYWQITVDSITMNGETIACAEGCQAIVDTGTSLLTGPTSPIANIQSDIGASENSDGDMVVSCSAISSLPDIVFTINGVQYPVPPSAYILQSEGSCISGFQGMNVPTESGELWILGDVFIRQYFTVFDRANNQVGLAPVA</sequence>
<reference key="1">
    <citation type="journal article" date="1989" name="Genomics">
        <title>Nucleotide sequence comparison of five human pepsinogen A (PGA) genes: evolution of the PGA multigene family.</title>
        <authorList>
            <person name="Evers M.P.J."/>
            <person name="Zelle B."/>
            <person name="Bebelman J.-P."/>
            <person name="van Beusechem V."/>
            <person name="Kraakman L."/>
            <person name="Hoffer M.J.V."/>
            <person name="Pronk J.C."/>
            <person name="Mager W.H."/>
            <person name="Planta R.J."/>
            <person name="Eriksson A.W."/>
            <person name="Frants R.R."/>
        </authorList>
    </citation>
    <scope>NUCLEOTIDE SEQUENCE [GENOMIC DNA]</scope>
    <source>
        <tissue>Placenta</tissue>
    </source>
</reference>
<reference key="2">
    <citation type="journal article" date="2006" name="Nature">
        <title>Human chromosome 11 DNA sequence and analysis including novel gene identification.</title>
        <authorList>
            <person name="Taylor T.D."/>
            <person name="Noguchi H."/>
            <person name="Totoki Y."/>
            <person name="Toyoda A."/>
            <person name="Kuroki Y."/>
            <person name="Dewar K."/>
            <person name="Lloyd C."/>
            <person name="Itoh T."/>
            <person name="Takeda T."/>
            <person name="Kim D.-W."/>
            <person name="She X."/>
            <person name="Barlow K.F."/>
            <person name="Bloom T."/>
            <person name="Bruford E."/>
            <person name="Chang J.L."/>
            <person name="Cuomo C.A."/>
            <person name="Eichler E."/>
            <person name="FitzGerald M.G."/>
            <person name="Jaffe D.B."/>
            <person name="LaButti K."/>
            <person name="Nicol R."/>
            <person name="Park H.-S."/>
            <person name="Seaman C."/>
            <person name="Sougnez C."/>
            <person name="Yang X."/>
            <person name="Zimmer A.R."/>
            <person name="Zody M.C."/>
            <person name="Birren B.W."/>
            <person name="Nusbaum C."/>
            <person name="Fujiyama A."/>
            <person name="Hattori M."/>
            <person name="Rogers J."/>
            <person name="Lander E.S."/>
            <person name="Sakaki Y."/>
        </authorList>
    </citation>
    <scope>NUCLEOTIDE SEQUENCE [LARGE SCALE GENOMIC DNA]</scope>
</reference>
<reference key="3">
    <citation type="submission" date="2005-07" db="EMBL/GenBank/DDBJ databases">
        <authorList>
            <person name="Mural R.J."/>
            <person name="Istrail S."/>
            <person name="Sutton G."/>
            <person name="Florea L."/>
            <person name="Halpern A.L."/>
            <person name="Mobarry C.M."/>
            <person name="Lippert R."/>
            <person name="Walenz B."/>
            <person name="Shatkay H."/>
            <person name="Dew I."/>
            <person name="Miller J.R."/>
            <person name="Flanigan M.J."/>
            <person name="Edwards N.J."/>
            <person name="Bolanos R."/>
            <person name="Fasulo D."/>
            <person name="Halldorsson B.V."/>
            <person name="Hannenhalli S."/>
            <person name="Turner R."/>
            <person name="Yooseph S."/>
            <person name="Lu F."/>
            <person name="Nusskern D.R."/>
            <person name="Shue B.C."/>
            <person name="Zheng X.H."/>
            <person name="Zhong F."/>
            <person name="Delcher A.L."/>
            <person name="Huson D.H."/>
            <person name="Kravitz S.A."/>
            <person name="Mouchard L."/>
            <person name="Reinert K."/>
            <person name="Remington K.A."/>
            <person name="Clark A.G."/>
            <person name="Waterman M.S."/>
            <person name="Eichler E.E."/>
            <person name="Adams M.D."/>
            <person name="Hunkapiller M.W."/>
            <person name="Myers E.W."/>
            <person name="Venter J.C."/>
        </authorList>
    </citation>
    <scope>NUCLEOTIDE SEQUENCE [LARGE SCALE GENOMIC DNA]</scope>
</reference>
<reference key="4">
    <citation type="journal article" date="2004" name="Genome Res.">
        <title>The status, quality, and expansion of the NIH full-length cDNA project: the Mammalian Gene Collection (MGC).</title>
        <authorList>
            <consortium name="The MGC Project Team"/>
        </authorList>
    </citation>
    <scope>NUCLEOTIDE SEQUENCE [LARGE SCALE MRNA]</scope>
    <source>
        <tissue>Brain</tissue>
        <tissue>Colon</tissue>
        <tissue>Kidney</tissue>
        <tissue>Stomach</tissue>
    </source>
</reference>
<reference key="5">
    <citation type="journal article" date="1985" name="J. Biochem.">
        <title>Isolation of human, swine, and rat prepepsinogens and calf preprochymosin, and determination of the primary structures of their NH2-terminal signal sequences.</title>
        <authorList>
            <person name="Ichihara Y."/>
            <person name="Sogawa K."/>
            <person name="Takahashi K."/>
        </authorList>
    </citation>
    <scope>PARTIAL PROTEIN SEQUENCE OF 1-28</scope>
</reference>
<reference key="6">
    <citation type="journal article" date="1989" name="J. Biochem.">
        <title>A comparative study on the NH2-terminal amino acid sequences and some other properties of six isozymic forms of human pepsinogens and pepsins.</title>
        <authorList>
            <person name="Athauda S.B.P."/>
            <person name="Tanji M."/>
            <person name="Kageyama T."/>
            <person name="Takahashi K."/>
        </authorList>
    </citation>
    <scope>PROTEIN SEQUENCE OF 16-100</scope>
</reference>
<reference key="7">
    <citation type="journal article" date="1988" name="FEBS Lett.">
        <title>Activation of human pepsinogens.</title>
        <authorList>
            <person name="Foltmann B."/>
        </authorList>
    </citation>
    <scope>PROTEIN SEQUENCE OF 16-68</scope>
</reference>
<reference key="8">
    <citation type="journal article" date="1970" name="J. Biol. Chem.">
        <title>Carboxyl-terminal sequence of human gastricsin and pepsin.</title>
        <authorList>
            <person name="Huang W.-Y."/>
            <person name="Tang J."/>
        </authorList>
    </citation>
    <scope>PROTEIN SEQUENCE OF 362-388</scope>
</reference>
<reference key="9">
    <citation type="journal article" date="1983" name="J. Biol. Chem.">
        <title>Primary structure of human pepsinogen gene.</title>
        <authorList>
            <person name="Sogawa K."/>
            <person name="Fujii-Kuriyama Y."/>
            <person name="Mizukami Y."/>
            <person name="Ichihara Y."/>
            <person name="Takahashi K."/>
        </authorList>
    </citation>
    <scope>IDENTIFICATION</scope>
</reference>
<reference key="10">
    <citation type="journal article" date="1995" name="Protein Sci.">
        <title>Crystal structure of human pepsin and its complex with pepstatin.</title>
        <authorList>
            <person name="Fujinaga M."/>
            <person name="Chernaia M.M."/>
            <person name="Tarasova N.I."/>
            <person name="Mosimann S.C."/>
            <person name="James M.N.G."/>
        </authorList>
    </citation>
    <scope>X-RAY CRYSTALLOGRAPHY (2.2 ANGSTROMS) OF 63-388</scope>
    <scope>ACTIVE SITES</scope>
    <scope>DISULFIDE BONDS</scope>
</reference>
<protein>
    <recommendedName>
        <fullName>Pepsin A-5</fullName>
        <ecNumber>3.4.23.1</ecNumber>
    </recommendedName>
    <alternativeName>
        <fullName>Pepsinogen-5</fullName>
    </alternativeName>
</protein>
<accession>P0DJD9</accession>
<accession>A8K749</accession>
<accession>B7ZW62</accession>
<accession>B7ZW75</accession>
<accession>P00790</accession>
<accession>Q7M4R0</accession>
<accession>Q8N1E3</accession>
<gene>
    <name type="primary">PGA5</name>
</gene>
<organism>
    <name type="scientific">Homo sapiens</name>
    <name type="common">Human</name>
    <dbReference type="NCBI Taxonomy" id="9606"/>
    <lineage>
        <taxon>Eukaryota</taxon>
        <taxon>Metazoa</taxon>
        <taxon>Chordata</taxon>
        <taxon>Craniata</taxon>
        <taxon>Vertebrata</taxon>
        <taxon>Euteleostomi</taxon>
        <taxon>Mammalia</taxon>
        <taxon>Eutheria</taxon>
        <taxon>Euarchontoglires</taxon>
        <taxon>Primates</taxon>
        <taxon>Haplorrhini</taxon>
        <taxon>Catarrhini</taxon>
        <taxon>Hominidae</taxon>
        <taxon>Homo</taxon>
    </lineage>
</organism>
<evidence type="ECO:0000250" key="1">
    <source>
        <dbReference type="UniProtKB" id="P03954"/>
    </source>
</evidence>
<evidence type="ECO:0000255" key="2">
    <source>
        <dbReference type="PROSITE-ProRule" id="PRU01103"/>
    </source>
</evidence>
<evidence type="ECO:0000255" key="3">
    <source>
        <dbReference type="PROSITE-ProRule" id="PRU10094"/>
    </source>
</evidence>
<evidence type="ECO:0000269" key="4">
    <source>
    </source>
</evidence>
<evidence type="ECO:0000269" key="5">
    <source>
    </source>
</evidence>
<evidence type="ECO:0000269" key="6">
    <source>
    </source>
</evidence>
<evidence type="ECO:0000305" key="7"/>
<dbReference type="EC" id="3.4.23.1"/>
<dbReference type="EMBL" id="M26032">
    <property type="protein sequence ID" value="AAA60061.1"/>
    <property type="molecule type" value="Genomic_DNA"/>
</dbReference>
<dbReference type="EMBL" id="M26025">
    <property type="protein sequence ID" value="AAA60061.1"/>
    <property type="status" value="JOINED"/>
    <property type="molecule type" value="Genomic_DNA"/>
</dbReference>
<dbReference type="EMBL" id="M26026">
    <property type="protein sequence ID" value="AAA60061.1"/>
    <property type="status" value="JOINED"/>
    <property type="molecule type" value="Genomic_DNA"/>
</dbReference>
<dbReference type="EMBL" id="M26027">
    <property type="protein sequence ID" value="AAA60061.1"/>
    <property type="status" value="JOINED"/>
    <property type="molecule type" value="Genomic_DNA"/>
</dbReference>
<dbReference type="EMBL" id="M26028">
    <property type="protein sequence ID" value="AAA60061.1"/>
    <property type="status" value="JOINED"/>
    <property type="molecule type" value="Genomic_DNA"/>
</dbReference>
<dbReference type="EMBL" id="M26029">
    <property type="protein sequence ID" value="AAA60061.1"/>
    <property type="status" value="JOINED"/>
    <property type="molecule type" value="Genomic_DNA"/>
</dbReference>
<dbReference type="EMBL" id="M26030">
    <property type="protein sequence ID" value="AAA60061.1"/>
    <property type="status" value="JOINED"/>
    <property type="molecule type" value="Genomic_DNA"/>
</dbReference>
<dbReference type="EMBL" id="M26031">
    <property type="protein sequence ID" value="AAA60061.1"/>
    <property type="status" value="JOINED"/>
    <property type="molecule type" value="Genomic_DNA"/>
</dbReference>
<dbReference type="EMBL" id="AP003037">
    <property type="status" value="NOT_ANNOTATED_CDS"/>
    <property type="molecule type" value="Genomic_DNA"/>
</dbReference>
<dbReference type="EMBL" id="CH471076">
    <property type="protein sequence ID" value="EAW73928.1"/>
    <property type="molecule type" value="Genomic_DNA"/>
</dbReference>
<dbReference type="EMBL" id="BC029055">
    <property type="protein sequence ID" value="AAH29055.1"/>
    <property type="molecule type" value="mRNA"/>
</dbReference>
<dbReference type="EMBL" id="BC146999">
    <property type="protein sequence ID" value="AAI47000.1"/>
    <property type="molecule type" value="mRNA"/>
</dbReference>
<dbReference type="EMBL" id="BC171889">
    <property type="protein sequence ID" value="AAI71889.1"/>
    <property type="molecule type" value="mRNA"/>
</dbReference>
<dbReference type="CCDS" id="CCDS8001.1"/>
<dbReference type="PIR" id="A00980">
    <property type="entry name" value="PEHU"/>
</dbReference>
<dbReference type="PIR" id="A30142">
    <property type="entry name" value="A30142"/>
</dbReference>
<dbReference type="PIR" id="A92058">
    <property type="entry name" value="A92058"/>
</dbReference>
<dbReference type="PIR" id="B30142">
    <property type="entry name" value="B30142"/>
</dbReference>
<dbReference type="RefSeq" id="NP_055039.1">
    <property type="nucleotide sequence ID" value="NM_014224.5"/>
</dbReference>
<dbReference type="SMR" id="P0DJD9"/>
<dbReference type="BioGRID" id="111243">
    <property type="interactions" value="1"/>
</dbReference>
<dbReference type="FunCoup" id="P0DJD9">
    <property type="interactions" value="103"/>
</dbReference>
<dbReference type="STRING" id="9606.ENSP00000309542"/>
<dbReference type="BindingDB" id="P0DJD9"/>
<dbReference type="ChEMBL" id="CHEMBL3295"/>
<dbReference type="DrugBank" id="DB00364">
    <property type="generic name" value="Sucralfate"/>
</dbReference>
<dbReference type="DrugCentral" id="P0DJD9"/>
<dbReference type="GuidetoPHARMACOLOGY" id="2390"/>
<dbReference type="MEROPS" id="A01.070"/>
<dbReference type="MEROPS" id="A01.071"/>
<dbReference type="GlyGen" id="P0DJD9">
    <property type="glycosylation" value="1 site"/>
</dbReference>
<dbReference type="iPTMnet" id="P0DJD9"/>
<dbReference type="PhosphoSitePlus" id="P0DJD9"/>
<dbReference type="BioMuta" id="PGA5"/>
<dbReference type="DMDM" id="378522017"/>
<dbReference type="MassIVE" id="P0DJD9"/>
<dbReference type="PaxDb" id="9606-ENSP00000309542"/>
<dbReference type="PeptideAtlas" id="P0DJD9"/>
<dbReference type="Antibodypedia" id="65697">
    <property type="antibodies" value="194 antibodies from 23 providers"/>
</dbReference>
<dbReference type="DNASU" id="5222"/>
<dbReference type="Ensembl" id="ENST00000312403.10">
    <property type="protein sequence ID" value="ENSP00000309542.6"/>
    <property type="gene ID" value="ENSG00000256713.8"/>
</dbReference>
<dbReference type="GeneID" id="5222"/>
<dbReference type="KEGG" id="hsa:5222"/>
<dbReference type="MANE-Select" id="ENST00000312403.10">
    <property type="protein sequence ID" value="ENSP00000309542.6"/>
    <property type="RefSeq nucleotide sequence ID" value="NM_014224.5"/>
    <property type="RefSeq protein sequence ID" value="NP_055039.1"/>
</dbReference>
<dbReference type="UCSC" id="uc001nqz.4">
    <property type="organism name" value="human"/>
</dbReference>
<dbReference type="AGR" id="HGNC:8887"/>
<dbReference type="CTD" id="5222"/>
<dbReference type="DisGeNET" id="5222"/>
<dbReference type="GeneCards" id="PGA5"/>
<dbReference type="HGNC" id="HGNC:8887">
    <property type="gene designation" value="PGA5"/>
</dbReference>
<dbReference type="HPA" id="ENSG00000256713">
    <property type="expression patterns" value="Tissue enriched (stomach)"/>
</dbReference>
<dbReference type="MIM" id="169700">
    <property type="type" value="gene"/>
</dbReference>
<dbReference type="MIM" id="169730">
    <property type="type" value="gene"/>
</dbReference>
<dbReference type="neXtProt" id="NX_P0DJD9"/>
<dbReference type="OpenTargets" id="ENSG00000256713"/>
<dbReference type="PharmGKB" id="PA33224"/>
<dbReference type="VEuPathDB" id="HostDB:ENSG00000256713"/>
<dbReference type="eggNOG" id="KOG1339">
    <property type="taxonomic scope" value="Eukaryota"/>
</dbReference>
<dbReference type="GeneTree" id="ENSGT00940000155036"/>
<dbReference type="HOGENOM" id="CLU_013253_3_0_1"/>
<dbReference type="InParanoid" id="P0DJD9"/>
<dbReference type="OMA" id="IHIMEHW"/>
<dbReference type="OrthoDB" id="9528103at2759"/>
<dbReference type="PAN-GO" id="P0DJD9">
    <property type="GO annotations" value="2 GO annotations based on evolutionary models"/>
</dbReference>
<dbReference type="PhylomeDB" id="P0DJD9"/>
<dbReference type="TreeFam" id="TF314990"/>
<dbReference type="PathwayCommons" id="P0DJD9"/>
<dbReference type="Reactome" id="R-HSA-5683826">
    <property type="pathway name" value="Surfactant metabolism"/>
</dbReference>
<dbReference type="BioGRID-ORCS" id="5222">
    <property type="hits" value="6 hits in 272 CRISPR screens"/>
</dbReference>
<dbReference type="ChiTaRS" id="PGA5">
    <property type="organism name" value="human"/>
</dbReference>
<dbReference type="GeneWiki" id="PGA5"/>
<dbReference type="GenomeRNAi" id="5222"/>
<dbReference type="Pharos" id="P0DJD9">
    <property type="development level" value="Tclin"/>
</dbReference>
<dbReference type="PRO" id="PR:P0DJD9"/>
<dbReference type="Proteomes" id="UP000005640">
    <property type="component" value="Chromosome 11"/>
</dbReference>
<dbReference type="RNAct" id="P0DJD9">
    <property type="molecule type" value="protein"/>
</dbReference>
<dbReference type="Bgee" id="ENSG00000256713">
    <property type="expression patterns" value="Expressed in body of stomach and 92 other cell types or tissues"/>
</dbReference>
<dbReference type="ExpressionAtlas" id="P0DJD9">
    <property type="expression patterns" value="baseline and differential"/>
</dbReference>
<dbReference type="GO" id="GO:0070062">
    <property type="term" value="C:extracellular exosome"/>
    <property type="evidence" value="ECO:0007005"/>
    <property type="project" value="UniProtKB"/>
</dbReference>
<dbReference type="GO" id="GO:0097486">
    <property type="term" value="C:multivesicular body lumen"/>
    <property type="evidence" value="ECO:0000304"/>
    <property type="project" value="Reactome"/>
</dbReference>
<dbReference type="GO" id="GO:0004190">
    <property type="term" value="F:aspartic-type endopeptidase activity"/>
    <property type="evidence" value="ECO:0000318"/>
    <property type="project" value="GO_Central"/>
</dbReference>
<dbReference type="GO" id="GO:0007586">
    <property type="term" value="P:digestion"/>
    <property type="evidence" value="ECO:0007669"/>
    <property type="project" value="UniProtKB-KW"/>
</dbReference>
<dbReference type="GO" id="GO:0006508">
    <property type="term" value="P:proteolysis"/>
    <property type="evidence" value="ECO:0000318"/>
    <property type="project" value="GO_Central"/>
</dbReference>
<dbReference type="CDD" id="cd05478">
    <property type="entry name" value="pepsin_A"/>
    <property type="match status" value="1"/>
</dbReference>
<dbReference type="FunFam" id="2.40.70.10:FF:000006">
    <property type="entry name" value="Cathepsin E"/>
    <property type="match status" value="1"/>
</dbReference>
<dbReference type="FunFam" id="2.40.70.10:FF:000004">
    <property type="entry name" value="Pepsin A"/>
    <property type="match status" value="1"/>
</dbReference>
<dbReference type="Gene3D" id="6.10.140.60">
    <property type="match status" value="1"/>
</dbReference>
<dbReference type="Gene3D" id="2.40.70.10">
    <property type="entry name" value="Acid Proteases"/>
    <property type="match status" value="2"/>
</dbReference>
<dbReference type="InterPro" id="IPR001461">
    <property type="entry name" value="Aspartic_peptidase_A1"/>
</dbReference>
<dbReference type="InterPro" id="IPR001969">
    <property type="entry name" value="Aspartic_peptidase_AS"/>
</dbReference>
<dbReference type="InterPro" id="IPR012848">
    <property type="entry name" value="Aspartic_peptidase_N"/>
</dbReference>
<dbReference type="InterPro" id="IPR034162">
    <property type="entry name" value="Pepsin_A"/>
</dbReference>
<dbReference type="InterPro" id="IPR033121">
    <property type="entry name" value="PEPTIDASE_A1"/>
</dbReference>
<dbReference type="InterPro" id="IPR021109">
    <property type="entry name" value="Peptidase_aspartic_dom_sf"/>
</dbReference>
<dbReference type="PANTHER" id="PTHR47966">
    <property type="entry name" value="BETA-SITE APP-CLEAVING ENZYME, ISOFORM A-RELATED"/>
    <property type="match status" value="1"/>
</dbReference>
<dbReference type="PANTHER" id="PTHR47966:SF22">
    <property type="entry name" value="PEPSIN A-3-RELATED"/>
    <property type="match status" value="1"/>
</dbReference>
<dbReference type="Pfam" id="PF07966">
    <property type="entry name" value="A1_Propeptide"/>
    <property type="match status" value="1"/>
</dbReference>
<dbReference type="Pfam" id="PF00026">
    <property type="entry name" value="Asp"/>
    <property type="match status" value="1"/>
</dbReference>
<dbReference type="PRINTS" id="PR00792">
    <property type="entry name" value="PEPSIN"/>
</dbReference>
<dbReference type="SUPFAM" id="SSF50630">
    <property type="entry name" value="Acid proteases"/>
    <property type="match status" value="1"/>
</dbReference>
<dbReference type="PROSITE" id="PS00141">
    <property type="entry name" value="ASP_PROTEASE"/>
    <property type="match status" value="2"/>
</dbReference>
<dbReference type="PROSITE" id="PS51767">
    <property type="entry name" value="PEPTIDASE_A1"/>
    <property type="match status" value="1"/>
</dbReference>
<keyword id="KW-0064">Aspartyl protease</keyword>
<keyword id="KW-0222">Digestion</keyword>
<keyword id="KW-0903">Direct protein sequencing</keyword>
<keyword id="KW-1015">Disulfide bond</keyword>
<keyword id="KW-0378">Hydrolase</keyword>
<keyword id="KW-0597">Phosphoprotein</keyword>
<keyword id="KW-0645">Protease</keyword>
<keyword id="KW-1267">Proteomics identification</keyword>
<keyword id="KW-1185">Reference proteome</keyword>
<keyword id="KW-0964">Secreted</keyword>
<keyword id="KW-0732">Signal</keyword>
<keyword id="KW-0865">Zymogen</keyword>
<proteinExistence type="evidence at protein level"/>
<feature type="signal peptide" evidence="4 5">
    <location>
        <begin position="1"/>
        <end position="15"/>
    </location>
</feature>
<feature type="propeptide" id="PRO_0000415759" description="Activation peptide">
    <location>
        <begin position="16"/>
        <end position="62"/>
    </location>
</feature>
<feature type="chain" id="PRO_0000415760" description="Pepsin A-5">
    <location>
        <begin position="63"/>
        <end position="388"/>
    </location>
</feature>
<feature type="domain" description="Peptidase A1" evidence="2">
    <location>
        <begin position="76"/>
        <end position="385"/>
    </location>
</feature>
<feature type="active site" evidence="3 6">
    <location>
        <position position="94"/>
    </location>
</feature>
<feature type="active site" evidence="3 6">
    <location>
        <position position="277"/>
    </location>
</feature>
<feature type="modified residue" description="Phosphoserine" evidence="1">
    <location>
        <position position="130"/>
    </location>
</feature>
<feature type="disulfide bond" evidence="6">
    <location>
        <begin position="107"/>
        <end position="112"/>
    </location>
</feature>
<feature type="disulfide bond" evidence="6">
    <location>
        <begin position="268"/>
        <end position="272"/>
    </location>
</feature>
<feature type="disulfide bond" evidence="6">
    <location>
        <begin position="311"/>
        <end position="344"/>
    </location>
</feature>
<feature type="sequence conflict" description="In Ref. 1; AAA60061." evidence="7" ref="1">
    <original>L</original>
    <variation>F</variation>
    <location>
        <position position="28"/>
    </location>
</feature>
<feature type="sequence conflict" description="In Ref. 1; AAA60061." evidence="7" ref="1">
    <original>E</original>
    <variation>K</variation>
    <location>
        <position position="58"/>
    </location>
</feature>
<feature type="sequence conflict" description="In Ref. 1; AAA60061." evidence="7" ref="1">
    <original>V</original>
    <variation>L</variation>
    <location>
        <position position="92"/>
    </location>
</feature>
<feature type="sequence conflict" description="In Ref. 1; AAA60061." evidence="7" ref="1">
    <original>K</original>
    <variation>Q</variation>
    <location>
        <position position="222"/>
    </location>
</feature>
<feature type="sequence conflict" description="In Ref. 1; AAA60061." evidence="7" ref="1">
    <original>T</original>
    <variation>A</variation>
    <location>
        <position position="265"/>
    </location>
</feature>
<feature type="sequence conflict" description="In Ref. 1; AAA60061." evidence="7" ref="1">
    <original>V</original>
    <variation>L</variation>
    <location>
        <position position="353"/>
    </location>
</feature>
<feature type="sequence conflict" description="In Ref. 8; AA sequence." evidence="7" ref="8">
    <original>YF</original>
    <variation>FY</variation>
    <location>
        <begin position="371"/>
        <end position="372"/>
    </location>
</feature>
<feature type="sequence conflict" description="In Ref. 1; AAA60061." evidence="7" ref="1">
    <original>D</original>
    <variation>E</variation>
    <location>
        <position position="376"/>
    </location>
</feature>
<name>PEPA5_HUMAN</name>
<comment type="function">
    <text>Shows particularly broad specificity; although bonds involving phenylalanine and leucine are preferred, many others are also cleaved to some extent.</text>
</comment>
<comment type="catalytic activity">
    <reaction evidence="3">
        <text>Preferential cleavage: hydrophobic, preferably aromatic, residues in P1 and P1' positions. Cleaves 1-Phe-|-Val-2, 4-Gln-|-His-5, 13-Glu-|-Ala-14, 14-Ala-|-Leu-15, 15-Leu-|-Tyr-16, 16-Tyr-|-Leu-17, 23-Gly-|-Phe-24, 24-Phe-|-Phe-25 and 25-Phe-|-Tyr-26 bonds in the B chain of insulin.</text>
        <dbReference type="EC" id="3.4.23.1"/>
    </reaction>
</comment>
<comment type="subcellular location">
    <subcellularLocation>
        <location>Secreted</location>
    </subcellularLocation>
</comment>
<comment type="similarity">
    <text evidence="7">Belongs to the peptidase A1 family.</text>
</comment>